<organism>
    <name type="scientific">Rattus norvegicus</name>
    <name type="common">Rat</name>
    <dbReference type="NCBI Taxonomy" id="10116"/>
    <lineage>
        <taxon>Eukaryota</taxon>
        <taxon>Metazoa</taxon>
        <taxon>Chordata</taxon>
        <taxon>Craniata</taxon>
        <taxon>Vertebrata</taxon>
        <taxon>Euteleostomi</taxon>
        <taxon>Mammalia</taxon>
        <taxon>Eutheria</taxon>
        <taxon>Euarchontoglires</taxon>
        <taxon>Glires</taxon>
        <taxon>Rodentia</taxon>
        <taxon>Myomorpha</taxon>
        <taxon>Muroidea</taxon>
        <taxon>Muridae</taxon>
        <taxon>Murinae</taxon>
        <taxon>Rattus</taxon>
    </lineage>
</organism>
<proteinExistence type="evidence at protein level"/>
<dbReference type="EMBL" id="AY208916">
    <property type="protein sequence ID" value="AAO60218.1"/>
    <property type="molecule type" value="mRNA"/>
</dbReference>
<dbReference type="EMBL" id="AY208915">
    <property type="protein sequence ID" value="AAO60217.1"/>
    <property type="molecule type" value="mRNA"/>
</dbReference>
<dbReference type="EMBL" id="BC072537">
    <property type="protein sequence ID" value="AAH72537.1"/>
    <property type="molecule type" value="mRNA"/>
</dbReference>
<dbReference type="RefSeq" id="NP_835194.2">
    <molecule id="Q6IMY1-1"/>
    <property type="nucleotide sequence ID" value="NM_178093.2"/>
</dbReference>
<dbReference type="RefSeq" id="XP_038950455.1">
    <molecule id="Q6IMY1-2"/>
    <property type="nucleotide sequence ID" value="XM_039094527.2"/>
</dbReference>
<dbReference type="SMR" id="Q6IMY1"/>
<dbReference type="STRING" id="10116.ENSRNOP00000069962"/>
<dbReference type="iPTMnet" id="Q6IMY1"/>
<dbReference type="PhosphoSitePlus" id="Q6IMY1"/>
<dbReference type="SwissPalm" id="Q6IMY1"/>
<dbReference type="PaxDb" id="10116-ENSRNOP00000030995"/>
<dbReference type="Ensembl" id="ENSRNOT00000037685.6">
    <molecule id="Q6IMY1-1"/>
    <property type="protein sequence ID" value="ENSRNOP00000030995.2"/>
    <property type="gene ID" value="ENSRNOG00000010748.9"/>
</dbReference>
<dbReference type="GeneID" id="306487"/>
<dbReference type="KEGG" id="rno:306487"/>
<dbReference type="AGR" id="RGD:631381"/>
<dbReference type="CTD" id="57509"/>
<dbReference type="RGD" id="631381">
    <property type="gene designation" value="Mtus1"/>
</dbReference>
<dbReference type="eggNOG" id="ENOG502QPVG">
    <property type="taxonomic scope" value="Eukaryota"/>
</dbReference>
<dbReference type="GeneTree" id="ENSGT00950000183026"/>
<dbReference type="HOGENOM" id="CLU_029786_1_0_1"/>
<dbReference type="InParanoid" id="Q6IMY1"/>
<dbReference type="PhylomeDB" id="Q6IMY1"/>
<dbReference type="PRO" id="PR:Q6IMY1"/>
<dbReference type="Proteomes" id="UP000002494">
    <property type="component" value="Chromosome 16"/>
</dbReference>
<dbReference type="Bgee" id="ENSRNOG00000010748">
    <property type="expression patterns" value="Expressed in heart and 19 other cell types or tissues"/>
</dbReference>
<dbReference type="ExpressionAtlas" id="Q6IMY1">
    <property type="expression patterns" value="baseline and differential"/>
</dbReference>
<dbReference type="GO" id="GO:0005737">
    <property type="term" value="C:cytoplasm"/>
    <property type="evidence" value="ECO:0000266"/>
    <property type="project" value="RGD"/>
</dbReference>
<dbReference type="GO" id="GO:0005794">
    <property type="term" value="C:Golgi apparatus"/>
    <property type="evidence" value="ECO:0007669"/>
    <property type="project" value="UniProtKB-SubCell"/>
</dbReference>
<dbReference type="GO" id="GO:0005739">
    <property type="term" value="C:mitochondrion"/>
    <property type="evidence" value="ECO:0007669"/>
    <property type="project" value="UniProtKB-SubCell"/>
</dbReference>
<dbReference type="GO" id="GO:0005634">
    <property type="term" value="C:nucleus"/>
    <property type="evidence" value="ECO:0000318"/>
    <property type="project" value="GO_Central"/>
</dbReference>
<dbReference type="GO" id="GO:0005886">
    <property type="term" value="C:plasma membrane"/>
    <property type="evidence" value="ECO:0007669"/>
    <property type="project" value="UniProtKB-SubCell"/>
</dbReference>
<dbReference type="GO" id="GO:0008017">
    <property type="term" value="F:microtubule binding"/>
    <property type="evidence" value="ECO:0000318"/>
    <property type="project" value="GO_Central"/>
</dbReference>
<dbReference type="GO" id="GO:1904385">
    <property type="term" value="P:cellular response to angiotensin"/>
    <property type="evidence" value="ECO:0000270"/>
    <property type="project" value="RGD"/>
</dbReference>
<dbReference type="GO" id="GO:0071375">
    <property type="term" value="P:cellular response to peptide hormone stimulus"/>
    <property type="evidence" value="ECO:0000270"/>
    <property type="project" value="RGD"/>
</dbReference>
<dbReference type="GO" id="GO:0010758">
    <property type="term" value="P:regulation of macrophage chemotaxis"/>
    <property type="evidence" value="ECO:0000266"/>
    <property type="project" value="RGD"/>
</dbReference>
<dbReference type="InterPro" id="IPR051293">
    <property type="entry name" value="MTUS1/CCDC69"/>
</dbReference>
<dbReference type="PANTHER" id="PTHR24200:SF7">
    <property type="entry name" value="MICROTUBULE-ASSOCIATED TUMOR SUPPRESSOR 1"/>
    <property type="match status" value="1"/>
</dbReference>
<dbReference type="PANTHER" id="PTHR24200">
    <property type="entry name" value="TOUCAN, ISOFORM A"/>
    <property type="match status" value="1"/>
</dbReference>
<gene>
    <name type="primary">Mtus1</name>
    <name type="synonym">Atip</name>
    <name type="synonym">Mtsg1</name>
</gene>
<name>MTUS1_RAT</name>
<sequence length="440" mass="50745">MLLSPKFSLSTIHVRLTAKGLLRNLRLPSGLRKNTVIFHTVEKGRQKNPRSLCIQTQTAPDVLSTERTLELADYKTKCENQSGFILHLKQLLSCGNTKFEALTVVIQHLLSEREEALKQHKTLSQELVSLRGELVAASSTCEKLEKARNDLQTAYEGFVQKLNQQHQTDQTELENRLKEFYTAECEKLQSIYIEEAEKYKTQLQEQFDNLNAAHETTKLEIEASHSEKVELLKKTYETSLSEIKKSHEMEKKLLENLLNEKQESLEKQINDLKSENDALNERLKSEEQKQLSREKANSKNPQVMYLEQELESLKAVLEIKNEKLHQQDLKLMKMEKLVDNNTTLVDKLTRFQQENEELKARMDRHMAISRQLSTEQAALQESLEKESKVNKRLSMENEELLWKLHNGDLCSPKRSPTSSAIPFQSPRNSGSFSSPSISPR</sequence>
<comment type="function">
    <text evidence="1">Cooperates with AGTR2 to inhibit ERK2 activation and cell proliferation. May be required for AGTR2 cell surface expression. Together with PTPN6, induces UBE2V2 expression upon angiotensin-II stimulation (By similarity).</text>
</comment>
<comment type="subunit">
    <text evidence="1">Homodimer. Interacts with AGTR2. Interacts with PTPN6 (By similarity).</text>
</comment>
<comment type="subcellular location">
    <subcellularLocation>
        <location evidence="1">Mitochondrion</location>
    </subcellularLocation>
    <subcellularLocation>
        <location evidence="1">Golgi apparatus</location>
    </subcellularLocation>
    <subcellularLocation>
        <location evidence="1">Cell membrane</location>
    </subcellularLocation>
    <subcellularLocation>
        <location evidence="1">Nucleus</location>
    </subcellularLocation>
    <text evidence="1">In neurons, translocates into the nucleus after treatment with angiotensin-II.</text>
</comment>
<comment type="alternative products">
    <event type="alternative splicing"/>
    <isoform>
        <id>Q6IMY1-1</id>
        <name>1</name>
        <sequence type="displayed"/>
    </isoform>
    <isoform>
        <id>Q6IMY1-2</id>
        <name>2</name>
        <sequence type="described" ref="VSP_028284 VSP_028285"/>
    </isoform>
</comment>
<comment type="tissue specificity">
    <text evidence="6">Present in neurons (at protein level).</text>
</comment>
<comment type="similarity">
    <text evidence="8">Belongs to the MTUS1 family.</text>
</comment>
<protein>
    <recommendedName>
        <fullName>Microtubule-associated tumor suppressor 1 homolog</fullName>
    </recommendedName>
    <alternativeName>
        <fullName>Angiotensin-II type 2 receptor-interacting protein</fullName>
    </alternativeName>
    <alternativeName>
        <fullName>Mitochondrial tumor suppressor 1 homolog</fullName>
    </alternativeName>
</protein>
<evidence type="ECO:0000250" key="1"/>
<evidence type="ECO:0000250" key="2">
    <source>
        <dbReference type="UniProtKB" id="Q5HZI1"/>
    </source>
</evidence>
<evidence type="ECO:0000250" key="3">
    <source>
        <dbReference type="UniProtKB" id="Q9ULD2"/>
    </source>
</evidence>
<evidence type="ECO:0000255" key="4"/>
<evidence type="ECO:0000256" key="5">
    <source>
        <dbReference type="SAM" id="MobiDB-lite"/>
    </source>
</evidence>
<evidence type="ECO:0000269" key="6">
    <source>
    </source>
</evidence>
<evidence type="ECO:0000303" key="7">
    <source ref="1"/>
</evidence>
<evidence type="ECO:0000305" key="8"/>
<evidence type="ECO:0007744" key="9">
    <source>
    </source>
</evidence>
<accession>Q6IMY1</accession>
<accession>Q6XUU5</accession>
<accession>Q80Z99</accession>
<feature type="chain" id="PRO_0000305200" description="Microtubule-associated tumor suppressor 1 homolog">
    <location>
        <begin position="1"/>
        <end position="440"/>
    </location>
</feature>
<feature type="region of interest" description="Disordered" evidence="5">
    <location>
        <begin position="407"/>
        <end position="440"/>
    </location>
</feature>
<feature type="coiled-coil region" evidence="4">
    <location>
        <begin position="106"/>
        <end position="401"/>
    </location>
</feature>
<feature type="compositionally biased region" description="Low complexity" evidence="5">
    <location>
        <begin position="425"/>
        <end position="440"/>
    </location>
</feature>
<feature type="modified residue" description="Phosphoserine" evidence="9">
    <location>
        <position position="373"/>
    </location>
</feature>
<feature type="modified residue" description="Phosphoserine" evidence="9">
    <location>
        <position position="394"/>
    </location>
</feature>
<feature type="modified residue" description="Phosphoserine" evidence="3">
    <location>
        <position position="415"/>
    </location>
</feature>
<feature type="modified residue" description="Phosphoserine" evidence="2">
    <location>
        <position position="425"/>
    </location>
</feature>
<feature type="modified residue" description="Phosphoserine" evidence="9">
    <location>
        <position position="429"/>
    </location>
</feature>
<feature type="modified residue" description="Phosphoserine" evidence="9">
    <location>
        <position position="431"/>
    </location>
</feature>
<feature type="modified residue" description="Phosphoserine" evidence="2">
    <location>
        <position position="433"/>
    </location>
</feature>
<feature type="modified residue" description="Phosphoserine" evidence="9">
    <location>
        <position position="434"/>
    </location>
</feature>
<feature type="modified residue" description="Phosphoserine" evidence="9">
    <location>
        <position position="438"/>
    </location>
</feature>
<feature type="splice variant" id="VSP_028284" description="In isoform 2." evidence="7">
    <location>
        <begin position="1"/>
        <end position="94"/>
    </location>
</feature>
<feature type="splice variant" id="VSP_028285" description="In isoform 2." evidence="7">
    <original>GNTKFEALTVVIQHLLSE</original>
    <variation>MGCPSSKMCLSPPQAAAR</variation>
    <location>
        <begin position="95"/>
        <end position="112"/>
    </location>
</feature>
<feature type="sequence conflict" description="In Ref. 1; AAO60217." evidence="8" ref="1">
    <original>D</original>
    <variation>Q</variation>
    <location>
        <position position="73"/>
    </location>
</feature>
<feature type="sequence conflict" description="In Ref. 1; AAO60218/AAO60217." evidence="8" ref="1">
    <original>T</original>
    <variation>A</variation>
    <location>
        <position position="343"/>
    </location>
</feature>
<reference key="1">
    <citation type="submission" date="2002-12" db="EMBL/GenBank/DDBJ databases">
        <title>Cloning and characterization of rat MTSG1.</title>
        <authorList>
            <person name="Seibold S."/>
            <person name="Wanner C."/>
            <person name="Galle J."/>
        </authorList>
    </citation>
    <scope>NUCLEOTIDE SEQUENCE [MRNA] (ISOFORMS 1 AND 2)</scope>
    <source>
        <strain>Wistar</strain>
    </source>
</reference>
<reference key="2">
    <citation type="journal article" date="2004" name="Genome Res.">
        <title>The status, quality, and expansion of the NIH full-length cDNA project: the Mammalian Gene Collection (MGC).</title>
        <authorList>
            <consortium name="The MGC Project Team"/>
        </authorList>
    </citation>
    <scope>NUCLEOTIDE SEQUENCE [LARGE SCALE MRNA] (ISOFORM 1)</scope>
    <source>
        <tissue>Heart</tissue>
    </source>
</reference>
<reference key="3">
    <citation type="journal article" date="2007" name="Mol. Endocrinol.">
        <title>Angiotensin II-induced neural differentiation via angiotensin II type 2 (AT2) receptor-MMS2 cascade involving interaction between AT2 receptor-interacting protein and Src homology 2 domain-containing protein-tyrosine phosphatase 1.</title>
        <authorList>
            <person name="Li J.-M."/>
            <person name="Mogi M."/>
            <person name="Tsukuda K."/>
            <person name="Tomochika H."/>
            <person name="Iwanami J."/>
            <person name="Min L.-J."/>
            <person name="Nahmias C."/>
            <person name="Iwai M."/>
            <person name="Horiuchi M."/>
        </authorList>
    </citation>
    <scope>TISSUE SPECIFICITY</scope>
</reference>
<reference key="4">
    <citation type="journal article" date="2012" name="Nat. Commun.">
        <title>Quantitative maps of protein phosphorylation sites across 14 different rat organs and tissues.</title>
        <authorList>
            <person name="Lundby A."/>
            <person name="Secher A."/>
            <person name="Lage K."/>
            <person name="Nordsborg N.B."/>
            <person name="Dmytriyev A."/>
            <person name="Lundby C."/>
            <person name="Olsen J.V."/>
        </authorList>
    </citation>
    <scope>PHOSPHORYLATION [LARGE SCALE ANALYSIS] AT SER-373; SER-394; SER-429; SER-431; SER-434 AND SER-438</scope>
    <scope>IDENTIFICATION BY MASS SPECTROMETRY [LARGE SCALE ANALYSIS]</scope>
</reference>
<keyword id="KW-0025">Alternative splicing</keyword>
<keyword id="KW-0131">Cell cycle</keyword>
<keyword id="KW-1003">Cell membrane</keyword>
<keyword id="KW-0175">Coiled coil</keyword>
<keyword id="KW-0333">Golgi apparatus</keyword>
<keyword id="KW-0472">Membrane</keyword>
<keyword id="KW-0496">Mitochondrion</keyword>
<keyword id="KW-0539">Nucleus</keyword>
<keyword id="KW-0597">Phosphoprotein</keyword>
<keyword id="KW-1185">Reference proteome</keyword>